<organism>
    <name type="scientific">Enterococcus faecalis (strain ATCC 700802 / V583)</name>
    <dbReference type="NCBI Taxonomy" id="226185"/>
    <lineage>
        <taxon>Bacteria</taxon>
        <taxon>Bacillati</taxon>
        <taxon>Bacillota</taxon>
        <taxon>Bacilli</taxon>
        <taxon>Lactobacillales</taxon>
        <taxon>Enterococcaceae</taxon>
        <taxon>Enterococcus</taxon>
    </lineage>
</organism>
<evidence type="ECO:0000255" key="1">
    <source>
        <dbReference type="HAMAP-Rule" id="MF_00152"/>
    </source>
</evidence>
<keyword id="KW-0227">DNA damage</keyword>
<keyword id="KW-0234">DNA repair</keyword>
<keyword id="KW-0255">Endonuclease</keyword>
<keyword id="KW-0378">Hydrolase</keyword>
<keyword id="KW-0479">Metal-binding</keyword>
<keyword id="KW-0540">Nuclease</keyword>
<keyword id="KW-1185">Reference proteome</keyword>
<keyword id="KW-0862">Zinc</keyword>
<comment type="function">
    <text evidence="1">Endonuclease IV plays a role in DNA repair. It cleaves phosphodiester bonds at apurinic or apyrimidinic (AP) sites, generating a 3'-hydroxyl group and a 5'-terminal sugar phosphate.</text>
</comment>
<comment type="catalytic activity">
    <reaction evidence="1">
        <text>Endonucleolytic cleavage to 5'-phosphooligonucleotide end-products.</text>
        <dbReference type="EC" id="3.1.21.2"/>
    </reaction>
</comment>
<comment type="cofactor">
    <cofactor evidence="1">
        <name>Zn(2+)</name>
        <dbReference type="ChEBI" id="CHEBI:29105"/>
    </cofactor>
    <text evidence="1">Binds 3 Zn(2+) ions.</text>
</comment>
<comment type="similarity">
    <text evidence="1">Belongs to the AP endonuclease 2 family.</text>
</comment>
<dbReference type="EC" id="3.1.21.2" evidence="1"/>
<dbReference type="EMBL" id="AE016830">
    <property type="protein sequence ID" value="AAO81510.1"/>
    <property type="molecule type" value="Genomic_DNA"/>
</dbReference>
<dbReference type="RefSeq" id="NP_815440.1">
    <property type="nucleotide sequence ID" value="NC_004668.1"/>
</dbReference>
<dbReference type="RefSeq" id="WP_002357396.1">
    <property type="nucleotide sequence ID" value="NZ_KE136528.1"/>
</dbReference>
<dbReference type="SMR" id="Q834D0"/>
<dbReference type="STRING" id="226185.EF_1736"/>
<dbReference type="EnsemblBacteria" id="AAO81510">
    <property type="protein sequence ID" value="AAO81510"/>
    <property type="gene ID" value="EF_1736"/>
</dbReference>
<dbReference type="KEGG" id="efa:EF1736"/>
<dbReference type="PATRIC" id="fig|226185.45.peg.1778"/>
<dbReference type="eggNOG" id="COG0648">
    <property type="taxonomic scope" value="Bacteria"/>
</dbReference>
<dbReference type="HOGENOM" id="CLU_025885_4_1_9"/>
<dbReference type="Proteomes" id="UP000001415">
    <property type="component" value="Chromosome"/>
</dbReference>
<dbReference type="GO" id="GO:0008833">
    <property type="term" value="F:deoxyribonuclease IV (phage-T4-induced) activity"/>
    <property type="evidence" value="ECO:0007669"/>
    <property type="project" value="UniProtKB-UniRule"/>
</dbReference>
<dbReference type="GO" id="GO:0003677">
    <property type="term" value="F:DNA binding"/>
    <property type="evidence" value="ECO:0007669"/>
    <property type="project" value="InterPro"/>
</dbReference>
<dbReference type="GO" id="GO:0003906">
    <property type="term" value="F:DNA-(apurinic or apyrimidinic site) endonuclease activity"/>
    <property type="evidence" value="ECO:0007669"/>
    <property type="project" value="TreeGrafter"/>
</dbReference>
<dbReference type="GO" id="GO:0008081">
    <property type="term" value="F:phosphoric diester hydrolase activity"/>
    <property type="evidence" value="ECO:0007669"/>
    <property type="project" value="TreeGrafter"/>
</dbReference>
<dbReference type="GO" id="GO:0008270">
    <property type="term" value="F:zinc ion binding"/>
    <property type="evidence" value="ECO:0007669"/>
    <property type="project" value="UniProtKB-UniRule"/>
</dbReference>
<dbReference type="GO" id="GO:0006284">
    <property type="term" value="P:base-excision repair"/>
    <property type="evidence" value="ECO:0007669"/>
    <property type="project" value="TreeGrafter"/>
</dbReference>
<dbReference type="CDD" id="cd00019">
    <property type="entry name" value="AP2Ec"/>
    <property type="match status" value="1"/>
</dbReference>
<dbReference type="FunFam" id="3.20.20.150:FF:000001">
    <property type="entry name" value="Probable endonuclease 4"/>
    <property type="match status" value="1"/>
</dbReference>
<dbReference type="Gene3D" id="3.20.20.150">
    <property type="entry name" value="Divalent-metal-dependent TIM barrel enzymes"/>
    <property type="match status" value="1"/>
</dbReference>
<dbReference type="HAMAP" id="MF_00152">
    <property type="entry name" value="Nfo"/>
    <property type="match status" value="1"/>
</dbReference>
<dbReference type="InterPro" id="IPR001719">
    <property type="entry name" value="AP_endonuc_2"/>
</dbReference>
<dbReference type="InterPro" id="IPR018246">
    <property type="entry name" value="AP_endonuc_F2_Zn_BS"/>
</dbReference>
<dbReference type="InterPro" id="IPR036237">
    <property type="entry name" value="Xyl_isomerase-like_sf"/>
</dbReference>
<dbReference type="InterPro" id="IPR013022">
    <property type="entry name" value="Xyl_isomerase-like_TIM-brl"/>
</dbReference>
<dbReference type="NCBIfam" id="TIGR00587">
    <property type="entry name" value="nfo"/>
    <property type="match status" value="1"/>
</dbReference>
<dbReference type="NCBIfam" id="NF002196">
    <property type="entry name" value="PRK01060.1-1"/>
    <property type="match status" value="1"/>
</dbReference>
<dbReference type="PANTHER" id="PTHR21445:SF0">
    <property type="entry name" value="APURINIC-APYRIMIDINIC ENDONUCLEASE"/>
    <property type="match status" value="1"/>
</dbReference>
<dbReference type="PANTHER" id="PTHR21445">
    <property type="entry name" value="ENDONUCLEASE IV ENDODEOXYRIBONUCLEASE IV"/>
    <property type="match status" value="1"/>
</dbReference>
<dbReference type="Pfam" id="PF01261">
    <property type="entry name" value="AP_endonuc_2"/>
    <property type="match status" value="1"/>
</dbReference>
<dbReference type="SMART" id="SM00518">
    <property type="entry name" value="AP2Ec"/>
    <property type="match status" value="1"/>
</dbReference>
<dbReference type="SUPFAM" id="SSF51658">
    <property type="entry name" value="Xylose isomerase-like"/>
    <property type="match status" value="1"/>
</dbReference>
<dbReference type="PROSITE" id="PS00729">
    <property type="entry name" value="AP_NUCLEASE_F2_1"/>
    <property type="match status" value="1"/>
</dbReference>
<dbReference type="PROSITE" id="PS00730">
    <property type="entry name" value="AP_NUCLEASE_F2_2"/>
    <property type="match status" value="1"/>
</dbReference>
<dbReference type="PROSITE" id="PS00731">
    <property type="entry name" value="AP_NUCLEASE_F2_3"/>
    <property type="match status" value="1"/>
</dbReference>
<dbReference type="PROSITE" id="PS51432">
    <property type="entry name" value="AP_NUCLEASE_F2_4"/>
    <property type="match status" value="1"/>
</dbReference>
<protein>
    <recommendedName>
        <fullName evidence="1">Probable endonuclease 4</fullName>
        <ecNumber evidence="1">3.1.21.2</ecNumber>
    </recommendedName>
    <alternativeName>
        <fullName evidence="1">Endodeoxyribonuclease IV</fullName>
    </alternativeName>
    <alternativeName>
        <fullName evidence="1">Endonuclease IV</fullName>
    </alternativeName>
</protein>
<proteinExistence type="inferred from homology"/>
<sequence>MLLGSHVSMSGKKMLLGSAEEAASYGSTTFMIYTGAPQNTRRKPIEEMNIEAGQAFMKEHNLSNIVVHAPYIINLGNTIKTENFGFAVDFLRQEIERAQALGATQITLHPGAHVGAGPEAGIKQIVKGLNEVLWKEQIPQIALETMAGKGTEIGRTFDELAAIIDGVTLNDKLSVTLDTCHINDAGYNVKDDFDGVLVEFDKIIGLDRLKVIHVNDSKNPMGSHKDRHANIGFGTIGFEALNGVVHHEKLTALPKILETPYVGEDKKNKKAPYGFEIAMLKNQTFDPELLEKIQGQN</sequence>
<feature type="chain" id="PRO_0000190841" description="Probable endonuclease 4">
    <location>
        <begin position="1"/>
        <end position="297"/>
    </location>
</feature>
<feature type="binding site" evidence="1">
    <location>
        <position position="68"/>
    </location>
    <ligand>
        <name>Zn(2+)</name>
        <dbReference type="ChEBI" id="CHEBI:29105"/>
        <label>1</label>
    </ligand>
</feature>
<feature type="binding site" evidence="1">
    <location>
        <position position="109"/>
    </location>
    <ligand>
        <name>Zn(2+)</name>
        <dbReference type="ChEBI" id="CHEBI:29105"/>
        <label>1</label>
    </ligand>
</feature>
<feature type="binding site" evidence="1">
    <location>
        <position position="144"/>
    </location>
    <ligand>
        <name>Zn(2+)</name>
        <dbReference type="ChEBI" id="CHEBI:29105"/>
        <label>1</label>
    </ligand>
</feature>
<feature type="binding site" evidence="1">
    <location>
        <position position="144"/>
    </location>
    <ligand>
        <name>Zn(2+)</name>
        <dbReference type="ChEBI" id="CHEBI:29105"/>
        <label>2</label>
    </ligand>
</feature>
<feature type="binding site" evidence="1">
    <location>
        <position position="178"/>
    </location>
    <ligand>
        <name>Zn(2+)</name>
        <dbReference type="ChEBI" id="CHEBI:29105"/>
        <label>2</label>
    </ligand>
</feature>
<feature type="binding site" evidence="1">
    <location>
        <position position="181"/>
    </location>
    <ligand>
        <name>Zn(2+)</name>
        <dbReference type="ChEBI" id="CHEBI:29105"/>
        <label>3</label>
    </ligand>
</feature>
<feature type="binding site" evidence="1">
    <location>
        <position position="213"/>
    </location>
    <ligand>
        <name>Zn(2+)</name>
        <dbReference type="ChEBI" id="CHEBI:29105"/>
        <label>2</label>
    </ligand>
</feature>
<feature type="binding site" evidence="1">
    <location>
        <position position="226"/>
    </location>
    <ligand>
        <name>Zn(2+)</name>
        <dbReference type="ChEBI" id="CHEBI:29105"/>
        <label>3</label>
    </ligand>
</feature>
<feature type="binding site" evidence="1">
    <location>
        <position position="228"/>
    </location>
    <ligand>
        <name>Zn(2+)</name>
        <dbReference type="ChEBI" id="CHEBI:29105"/>
        <label>3</label>
    </ligand>
</feature>
<feature type="binding site" evidence="1">
    <location>
        <position position="258"/>
    </location>
    <ligand>
        <name>Zn(2+)</name>
        <dbReference type="ChEBI" id="CHEBI:29105"/>
        <label>2</label>
    </ligand>
</feature>
<reference key="1">
    <citation type="journal article" date="2003" name="Science">
        <title>Role of mobile DNA in the evolution of vancomycin-resistant Enterococcus faecalis.</title>
        <authorList>
            <person name="Paulsen I.T."/>
            <person name="Banerjei L."/>
            <person name="Myers G.S.A."/>
            <person name="Nelson K.E."/>
            <person name="Seshadri R."/>
            <person name="Read T.D."/>
            <person name="Fouts D.E."/>
            <person name="Eisen J.A."/>
            <person name="Gill S.R."/>
            <person name="Heidelberg J.F."/>
            <person name="Tettelin H."/>
            <person name="Dodson R.J."/>
            <person name="Umayam L.A."/>
            <person name="Brinkac L.M."/>
            <person name="Beanan M.J."/>
            <person name="Daugherty S.C."/>
            <person name="DeBoy R.T."/>
            <person name="Durkin S.A."/>
            <person name="Kolonay J.F."/>
            <person name="Madupu R."/>
            <person name="Nelson W.C."/>
            <person name="Vamathevan J.J."/>
            <person name="Tran B."/>
            <person name="Upton J."/>
            <person name="Hansen T."/>
            <person name="Shetty J."/>
            <person name="Khouri H.M."/>
            <person name="Utterback T.R."/>
            <person name="Radune D."/>
            <person name="Ketchum K.A."/>
            <person name="Dougherty B.A."/>
            <person name="Fraser C.M."/>
        </authorList>
    </citation>
    <scope>NUCLEOTIDE SEQUENCE [LARGE SCALE GENOMIC DNA]</scope>
    <source>
        <strain>ATCC 700802 / V583</strain>
    </source>
</reference>
<accession>Q834D0</accession>
<name>END4_ENTFA</name>
<gene>
    <name evidence="1" type="primary">nfo</name>
    <name type="ordered locus">EF_1736</name>
</gene>